<comment type="function">
    <text>IRBP shuttles 11-cis and all trans retinoids between the retinol isomerase in the pigment epithelium and the visual pigments in the photoreceptor cells of the retina.</text>
</comment>
<comment type="subcellular location">
    <subcellularLocation>
        <location>Secreted</location>
        <location>Extracellular space</location>
        <location>Extracellular matrix</location>
        <location>Interphotoreceptor matrix</location>
    </subcellularLocation>
    <text>Interphotoreceptor matrix that permeates the space between the retina and the contiguous layer of pigment epithelium cells.</text>
</comment>
<dbReference type="PIR" id="D24417">
    <property type="entry name" value="D24417"/>
</dbReference>
<dbReference type="STRING" id="10141.ENSCPOP00000031043"/>
<dbReference type="InParanoid" id="P12666"/>
<dbReference type="Proteomes" id="UP000005447">
    <property type="component" value="Unassembled WGS sequence"/>
</dbReference>
<dbReference type="GO" id="GO:0005576">
    <property type="term" value="C:extracellular region"/>
    <property type="evidence" value="ECO:0007669"/>
    <property type="project" value="UniProtKB-KW"/>
</dbReference>
<dbReference type="GO" id="GO:0033165">
    <property type="term" value="C:interphotoreceptor matrix"/>
    <property type="evidence" value="ECO:0007669"/>
    <property type="project" value="UniProtKB-SubCell"/>
</dbReference>
<dbReference type="GO" id="GO:0016918">
    <property type="term" value="F:retinal binding"/>
    <property type="evidence" value="ECO:0007669"/>
    <property type="project" value="UniProtKB-KW"/>
</dbReference>
<protein>
    <recommendedName>
        <fullName>Retinol-binding protein 3</fullName>
    </recommendedName>
    <alternativeName>
        <fullName>Interphotoreceptor retinoid-binding protein</fullName>
        <shortName>IRBP</shortName>
    </alternativeName>
    <alternativeName>
        <fullName>Interstitial retinol-binding protein</fullName>
    </alternativeName>
</protein>
<organism>
    <name type="scientific">Cavia porcellus</name>
    <name type="common">Guinea pig</name>
    <dbReference type="NCBI Taxonomy" id="10141"/>
    <lineage>
        <taxon>Eukaryota</taxon>
        <taxon>Metazoa</taxon>
        <taxon>Chordata</taxon>
        <taxon>Craniata</taxon>
        <taxon>Vertebrata</taxon>
        <taxon>Euteleostomi</taxon>
        <taxon>Mammalia</taxon>
        <taxon>Eutheria</taxon>
        <taxon>Euarchontoglires</taxon>
        <taxon>Glires</taxon>
        <taxon>Rodentia</taxon>
        <taxon>Hystricomorpha</taxon>
        <taxon>Caviidae</taxon>
        <taxon>Cavia</taxon>
    </lineage>
</organism>
<gene>
    <name type="primary">RBP3</name>
</gene>
<name>RET3_CAVPO</name>
<accession>P12666</accession>
<feature type="chain" id="PRO_0000084228" description="Retinol-binding protein 3">
    <location>
        <begin position="1"/>
        <end position="19" status="greater than"/>
    </location>
</feature>
<feature type="non-terminal residue">
    <location>
        <position position="19"/>
    </location>
</feature>
<sequence length="19" mass="2155">THLFQPSLVLDMAKVLLDN</sequence>
<proteinExistence type="evidence at protein level"/>
<reference key="1">
    <citation type="journal article" date="1986" name="FEBS Lett.">
        <title>N-terminal sequence homologies in interstitial retinol-binding proteins from 10 vertebrate species.</title>
        <authorList>
            <person name="Fong S.-L."/>
            <person name="Cook R.G."/>
            <person name="Alvarez R.A."/>
            <person name="Liou G.I."/>
            <person name="Landers R.A."/>
            <person name="Bridges C.D.B."/>
        </authorList>
    </citation>
    <scope>PROTEIN SEQUENCE</scope>
</reference>
<keyword id="KW-0903">Direct protein sequencing</keyword>
<keyword id="KW-0272">Extracellular matrix</keyword>
<keyword id="KW-1185">Reference proteome</keyword>
<keyword id="KW-0964">Secreted</keyword>
<keyword id="KW-0813">Transport</keyword>
<keyword id="KW-0845">Vitamin A</keyword>